<feature type="peptide" id="PRO_0000419828" description="Omega-conotoxin-like CnVIIH" evidence="3">
    <location>
        <begin position="1"/>
        <end position="28"/>
    </location>
</feature>
<feature type="peptide" id="PRO_0000044481" description="Omega-conotoxin CnVIIA" evidence="2">
    <location>
        <begin position="1"/>
        <end position="27"/>
    </location>
</feature>
<feature type="site" description="Essential for calcium channel binding" evidence="1">
    <location>
        <position position="13"/>
    </location>
</feature>
<feature type="modified residue" description="4-hydroxyproline; partial" evidence="3">
    <location>
        <position position="7"/>
    </location>
</feature>
<feature type="modified residue" description="Methionine sulfoxide" evidence="3">
    <location>
        <position position="12"/>
    </location>
</feature>
<feature type="modified residue" description="Cysteine amide" evidence="2 3">
    <location>
        <position position="27"/>
    </location>
</feature>
<feature type="disulfide bond" evidence="1">
    <location>
        <begin position="1"/>
        <end position="16"/>
    </location>
</feature>
<feature type="disulfide bond" evidence="1">
    <location>
        <begin position="8"/>
        <end position="20"/>
    </location>
</feature>
<feature type="disulfide bond" evidence="1">
    <location>
        <begin position="15"/>
        <end position="27"/>
    </location>
</feature>
<sequence length="28" mass="2896">CKGKGAPCTRLMYDCCHGSCSSSKGRCG</sequence>
<name>O17H_CONCN</name>
<evidence type="ECO:0000250" key="1"/>
<evidence type="ECO:0000269" key="2">
    <source>
    </source>
</evidence>
<evidence type="ECO:0000269" key="3">
    <source>
    </source>
</evidence>
<evidence type="ECO:0000303" key="4">
    <source>
    </source>
</evidence>
<evidence type="ECO:0000303" key="5">
    <source>
    </source>
</evidence>
<evidence type="ECO:0000305" key="6"/>
<evidence type="ECO:0000305" key="7">
    <source>
    </source>
</evidence>
<evidence type="ECO:0000305" key="8">
    <source>
    </source>
</evidence>
<comment type="function">
    <text evidence="2">Omega-conotoxins act at presynaptic membranes, they bind and block voltage-gated calcium channels (Cav). This toxin blocks N-type calcium channels (Cav2.2/CACNA1B) with high potency. Unexpectedly, it does not show any blocking activity at amphibian neuromuscular junction. In vivo, when intracerebroventricularly injected into mice causes shaking activity, and, at higher doses, causes mild tremors. When injected intramuscularly into fish, it causes paralysis, and, at higher doses, causes death.</text>
</comment>
<comment type="subcellular location">
    <subcellularLocation>
        <location evidence="2">Secreted</location>
    </subcellularLocation>
</comment>
<comment type="tissue specificity">
    <text evidence="7">Expressed by the venom duct.</text>
</comment>
<comment type="domain">
    <text evidence="1">The presence of a 'disulfide through disulfide knot' structurally defines this protein as a knottin.</text>
</comment>
<comment type="domain">
    <text>The cysteine framework is VI/VII (C-C-CC-C-C).</text>
</comment>
<comment type="mass spectrometry" mass="2847.74" method="Electrospray" evidence="2">
    <molecule>Omega-conotoxin CnVIIA</molecule>
</comment>
<comment type="mass spectrometry" mass="2904.17" method="Electrospray" evidence="3">
    <molecule>Omega-conotoxin-like CnVIIH</molecule>
    <text>CnVIIH.</text>
</comment>
<comment type="mass spectrometry" mass="2846.14" method="Electrospray" evidence="3">
    <molecule>Omega-conotoxin CnVIIA</molecule>
    <text>[Hyp7]-CnVIIA and [Pro7, oxMet12]-CnVIIA.</text>
</comment>
<comment type="mass spectrometry" mass="2830.19" method="Electrospray" evidence="3">
    <molecule>Omega-conotoxin CnVIIA</molecule>
    <text>[Pro7]CnVIIA.</text>
</comment>
<comment type="miscellaneous">
    <text evidence="8">Found in injectable (milked) (IV) venom.</text>
</comment>
<comment type="similarity">
    <text evidence="6">Belongs to the conotoxin O1 superfamily.</text>
</comment>
<organism>
    <name type="scientific">Conus consors</name>
    <name type="common">Singed cone</name>
    <dbReference type="NCBI Taxonomy" id="101297"/>
    <lineage>
        <taxon>Eukaryota</taxon>
        <taxon>Metazoa</taxon>
        <taxon>Spiralia</taxon>
        <taxon>Lophotrochozoa</taxon>
        <taxon>Mollusca</taxon>
        <taxon>Gastropoda</taxon>
        <taxon>Caenogastropoda</taxon>
        <taxon>Neogastropoda</taxon>
        <taxon>Conoidea</taxon>
        <taxon>Conidae</taxon>
        <taxon>Conus</taxon>
        <taxon>Pionoconus</taxon>
    </lineage>
</organism>
<accession>P58916</accession>
<reference key="1">
    <citation type="journal article" date="2001" name="Biochemistry">
        <title>A new omega-conotoxin that targets N-type voltage-sensitive calcium channels with unusual specificity.</title>
        <authorList>
            <person name="Favreau P."/>
            <person name="Gilles N."/>
            <person name="Lamthanh H."/>
            <person name="Bournaud R."/>
            <person name="Shimahara T."/>
            <person name="Bouet F."/>
            <person name="Laboute P."/>
            <person name="Letourneux Y."/>
            <person name="Menez A."/>
            <person name="Molgo J."/>
            <person name="Le Gall F."/>
        </authorList>
    </citation>
    <scope>PROTEIN SEQUENCE</scope>
    <scope>SYNTHESIS</scope>
    <scope>FUNCTION</scope>
    <scope>MASS SPECTROMETRY</scope>
    <scope>SUBCELLULAR LOCATION</scope>
    <scope>AMIDATION AT CYS-27</scope>
    <source>
        <tissue>Venom</tissue>
    </source>
</reference>
<reference key="2">
    <citation type="journal article" date="2012" name="J. Proteomics">
        <title>Large-scale discovery of conopeptides and conoproteins in the injectable venom of a fish-hunting cone snail using a combined proteomic and transcriptomic approach.</title>
        <authorList>
            <person name="Violette A."/>
            <person name="Biass D."/>
            <person name="Dutertre S."/>
            <person name="Koua D."/>
            <person name="Piquemal D."/>
            <person name="Pierrat F."/>
            <person name="Stocklin R."/>
            <person name="Favreau P."/>
        </authorList>
    </citation>
    <scope>NUCLEOTIDE SEQUENCE [MRNA]</scope>
    <scope>HYDROXYLATION AT PRO-7</scope>
    <scope>OXIDATION AT MET-12</scope>
    <scope>AMIDATION AT CYS-27</scope>
    <scope>MASS SPECTROMETRY</scope>
    <scope>IDENTIFICATION BY MASS SPECTROMETRY</scope>
    <source>
        <tissue>Venom</tissue>
        <tissue>Venom duct</tissue>
    </source>
</reference>
<keyword id="KW-0027">Amidation</keyword>
<keyword id="KW-0108">Calcium channel impairing toxin</keyword>
<keyword id="KW-0903">Direct protein sequencing</keyword>
<keyword id="KW-1015">Disulfide bond</keyword>
<keyword id="KW-0379">Hydroxylation</keyword>
<keyword id="KW-0872">Ion channel impairing toxin</keyword>
<keyword id="KW-0960">Knottin</keyword>
<keyword id="KW-0528">Neurotoxin</keyword>
<keyword id="KW-0558">Oxidation</keyword>
<keyword id="KW-0638">Presynaptic neurotoxin</keyword>
<keyword id="KW-0964">Secreted</keyword>
<keyword id="KW-0800">Toxin</keyword>
<keyword id="KW-1218">Voltage-gated calcium channel impairing toxin</keyword>
<proteinExistence type="evidence at protein level"/>
<dbReference type="SMR" id="P58916"/>
<dbReference type="ConoServer" id="1632">
    <property type="toxin name" value="CnVIIA"/>
</dbReference>
<dbReference type="GO" id="GO:0005576">
    <property type="term" value="C:extracellular region"/>
    <property type="evidence" value="ECO:0007669"/>
    <property type="project" value="UniProtKB-SubCell"/>
</dbReference>
<dbReference type="GO" id="GO:0044231">
    <property type="term" value="C:host cell presynaptic membrane"/>
    <property type="evidence" value="ECO:0007669"/>
    <property type="project" value="UniProtKB-KW"/>
</dbReference>
<dbReference type="GO" id="GO:0005246">
    <property type="term" value="F:calcium channel regulator activity"/>
    <property type="evidence" value="ECO:0007669"/>
    <property type="project" value="UniProtKB-KW"/>
</dbReference>
<dbReference type="GO" id="GO:0008200">
    <property type="term" value="F:ion channel inhibitor activity"/>
    <property type="evidence" value="ECO:0007669"/>
    <property type="project" value="InterPro"/>
</dbReference>
<dbReference type="GO" id="GO:0090729">
    <property type="term" value="F:toxin activity"/>
    <property type="evidence" value="ECO:0007669"/>
    <property type="project" value="UniProtKB-KW"/>
</dbReference>
<dbReference type="InterPro" id="IPR012321">
    <property type="entry name" value="Conotoxin_omega-typ_CS"/>
</dbReference>
<dbReference type="SUPFAM" id="SSF57059">
    <property type="entry name" value="omega toxin-like"/>
    <property type="match status" value="1"/>
</dbReference>
<dbReference type="PROSITE" id="PS60004">
    <property type="entry name" value="OMEGA_CONOTOXIN"/>
    <property type="match status" value="1"/>
</dbReference>
<protein>
    <recommendedName>
        <fullName evidence="5">Omega-conotoxin-like CnVIIH</fullName>
    </recommendedName>
    <component>
        <recommendedName>
            <fullName evidence="4">Omega-conotoxin CnVIIA</fullName>
        </recommendedName>
    </component>
</protein>